<proteinExistence type="evidence at protein level"/>
<organism>
    <name type="scientific">Drosophila melanogaster</name>
    <name type="common">Fruit fly</name>
    <dbReference type="NCBI Taxonomy" id="7227"/>
    <lineage>
        <taxon>Eukaryota</taxon>
        <taxon>Metazoa</taxon>
        <taxon>Ecdysozoa</taxon>
        <taxon>Arthropoda</taxon>
        <taxon>Hexapoda</taxon>
        <taxon>Insecta</taxon>
        <taxon>Pterygota</taxon>
        <taxon>Neoptera</taxon>
        <taxon>Endopterygota</taxon>
        <taxon>Diptera</taxon>
        <taxon>Brachycera</taxon>
        <taxon>Muscomorpha</taxon>
        <taxon>Ephydroidea</taxon>
        <taxon>Drosophilidae</taxon>
        <taxon>Drosophila</taxon>
        <taxon>Sophophora</taxon>
    </lineage>
</organism>
<protein>
    <recommendedName>
        <fullName>LIM/homeobox protein Awh</fullName>
    </recommendedName>
    <alternativeName>
        <fullName>Protein arrowhead</fullName>
    </alternativeName>
</protein>
<sequence>MKTELRSCAACGEPISDRFFLEVGGCSWHAHCLRCCMCMCPLDRQQSCFIRERQVYCKADYSKNFGAKCSKCCRGISASDWVRRARELVFHLACFACDQCGRQLSTGEQFALMDDRVLCKAHYLETVEGGTTSSDEGCDGDGYHKSKTKRVRTTFTEEQLQVLQANFQIDSNPDGQDLERIASVTGLSKRVTQVWFQNSRARQKKHIHAGKNKIREPEGSSFARHINLQLTYSFQNNAQNPMHLNGSKAGLYPTHESSMDELSQDSSVHCMPSEV</sequence>
<accession>Q8IRC7</accession>
<accession>O18547</accession>
<accession>Q1LYZ6</accession>
<accession>Q8SZ10</accession>
<accession>Q9VZM0</accession>
<keyword id="KW-0025">Alternative splicing</keyword>
<keyword id="KW-0217">Developmental protein</keyword>
<keyword id="KW-0238">DNA-binding</keyword>
<keyword id="KW-0371">Homeobox</keyword>
<keyword id="KW-0440">LIM domain</keyword>
<keyword id="KW-0479">Metal-binding</keyword>
<keyword id="KW-0539">Nucleus</keyword>
<keyword id="KW-0597">Phosphoprotein</keyword>
<keyword id="KW-1185">Reference proteome</keyword>
<keyword id="KW-0677">Repeat</keyword>
<keyword id="KW-0804">Transcription</keyword>
<keyword id="KW-0805">Transcription regulation</keyword>
<keyword id="KW-0862">Zinc</keyword>
<feature type="chain" id="PRO_0000075705" description="LIM/homeobox protein Awh">
    <location>
        <begin position="1"/>
        <end position="275"/>
    </location>
</feature>
<feature type="domain" description="LIM zinc-binding 1" evidence="2">
    <location>
        <begin position="6"/>
        <end position="67"/>
    </location>
</feature>
<feature type="domain" description="LIM zinc-binding 2" evidence="2">
    <location>
        <begin position="68"/>
        <end position="129"/>
    </location>
</feature>
<feature type="DNA-binding region" description="Homeobox" evidence="1">
    <location>
        <begin position="148"/>
        <end position="207"/>
    </location>
</feature>
<feature type="region of interest" description="Disordered" evidence="3">
    <location>
        <begin position="253"/>
        <end position="275"/>
    </location>
</feature>
<feature type="modified residue" description="Phosphothreonine" evidence="6">
    <location>
        <position position="126"/>
    </location>
</feature>
<feature type="splice variant" id="VSP_051714" description="In isoform A." evidence="9">
    <original>I</original>
    <variation>K</variation>
    <location>
        <position position="214"/>
    </location>
</feature>
<feature type="splice variant" id="VSP_051715" description="In isoform A." evidence="9">
    <location>
        <begin position="215"/>
        <end position="275"/>
    </location>
</feature>
<feature type="mutagenesis site" description="In allele 11; may cause loss of zinc binding." evidence="7">
    <original>C</original>
    <variation>Y</variation>
    <location>
        <position position="57"/>
    </location>
</feature>
<feature type="mutagenesis site" description="In allele 13; may alter structure of LIM domain." evidence="7">
    <original>L</original>
    <variation>T</variation>
    <location>
        <position position="88"/>
    </location>
</feature>
<feature type="mutagenesis site" description="In allele 17; may alter structure of LIM domain." evidence="7">
    <original>V</original>
    <variation>E</variation>
    <location>
        <position position="117"/>
    </location>
</feature>
<feature type="sequence conflict" description="In Ref. 1; AAB71337." evidence="10" ref="1">
    <original>C</original>
    <variation>S</variation>
    <location>
        <position position="72"/>
    </location>
</feature>
<feature type="sequence conflict" description="In Ref. 4; AAL48819." evidence="10" ref="4">
    <original>G</original>
    <variation>D</variation>
    <location>
        <position position="175"/>
    </location>
</feature>
<feature type="sequence conflict" description="In Ref. 1; AAB71337." evidence="10" ref="1">
    <original>Q</original>
    <variation>E</variation>
    <location>
        <position position="193"/>
    </location>
</feature>
<reference evidence="10 11" key="1">
    <citation type="journal article" date="1997" name="Dev. Biol.">
        <title>Arrowhead encodes a LIM homeodomain protein that distinguishes subsets of Drosophila imaginal cells.</title>
        <authorList>
            <person name="Curtiss J."/>
            <person name="Heilig J.S."/>
        </authorList>
    </citation>
    <scope>NUCLEOTIDE SEQUENCE [MRNA] (ISOFORM A)</scope>
    <scope>FUNCTION</scope>
    <scope>TISSUE SPECIFICITY</scope>
    <scope>DEVELOPMENTAL STAGE</scope>
    <scope>MUTAGENESIS OF CYS-57; LEU-88 AND VAL-117</scope>
    <source>
        <strain evidence="11">Oregon-R</strain>
        <tissue evidence="7">Embryo</tissue>
    </source>
</reference>
<reference evidence="13" key="2">
    <citation type="journal article" date="2000" name="Science">
        <title>The genome sequence of Drosophila melanogaster.</title>
        <authorList>
            <person name="Adams M.D."/>
            <person name="Celniker S.E."/>
            <person name="Holt R.A."/>
            <person name="Evans C.A."/>
            <person name="Gocayne J.D."/>
            <person name="Amanatides P.G."/>
            <person name="Scherer S.E."/>
            <person name="Li P.W."/>
            <person name="Hoskins R.A."/>
            <person name="Galle R.F."/>
            <person name="George R.A."/>
            <person name="Lewis S.E."/>
            <person name="Richards S."/>
            <person name="Ashburner M."/>
            <person name="Henderson S.N."/>
            <person name="Sutton G.G."/>
            <person name="Wortman J.R."/>
            <person name="Yandell M.D."/>
            <person name="Zhang Q."/>
            <person name="Chen L.X."/>
            <person name="Brandon R.C."/>
            <person name="Rogers Y.-H.C."/>
            <person name="Blazej R.G."/>
            <person name="Champe M."/>
            <person name="Pfeiffer B.D."/>
            <person name="Wan K.H."/>
            <person name="Doyle C."/>
            <person name="Baxter E.G."/>
            <person name="Helt G."/>
            <person name="Nelson C.R."/>
            <person name="Miklos G.L.G."/>
            <person name="Abril J.F."/>
            <person name="Agbayani A."/>
            <person name="An H.-J."/>
            <person name="Andrews-Pfannkoch C."/>
            <person name="Baldwin D."/>
            <person name="Ballew R.M."/>
            <person name="Basu A."/>
            <person name="Baxendale J."/>
            <person name="Bayraktaroglu L."/>
            <person name="Beasley E.M."/>
            <person name="Beeson K.Y."/>
            <person name="Benos P.V."/>
            <person name="Berman B.P."/>
            <person name="Bhandari D."/>
            <person name="Bolshakov S."/>
            <person name="Borkova D."/>
            <person name="Botchan M.R."/>
            <person name="Bouck J."/>
            <person name="Brokstein P."/>
            <person name="Brottier P."/>
            <person name="Burtis K.C."/>
            <person name="Busam D.A."/>
            <person name="Butler H."/>
            <person name="Cadieu E."/>
            <person name="Center A."/>
            <person name="Chandra I."/>
            <person name="Cherry J.M."/>
            <person name="Cawley S."/>
            <person name="Dahlke C."/>
            <person name="Davenport L.B."/>
            <person name="Davies P."/>
            <person name="de Pablos B."/>
            <person name="Delcher A."/>
            <person name="Deng Z."/>
            <person name="Mays A.D."/>
            <person name="Dew I."/>
            <person name="Dietz S.M."/>
            <person name="Dodson K."/>
            <person name="Doup L.E."/>
            <person name="Downes M."/>
            <person name="Dugan-Rocha S."/>
            <person name="Dunkov B.C."/>
            <person name="Dunn P."/>
            <person name="Durbin K.J."/>
            <person name="Evangelista C.C."/>
            <person name="Ferraz C."/>
            <person name="Ferriera S."/>
            <person name="Fleischmann W."/>
            <person name="Fosler C."/>
            <person name="Gabrielian A.E."/>
            <person name="Garg N.S."/>
            <person name="Gelbart W.M."/>
            <person name="Glasser K."/>
            <person name="Glodek A."/>
            <person name="Gong F."/>
            <person name="Gorrell J.H."/>
            <person name="Gu Z."/>
            <person name="Guan P."/>
            <person name="Harris M."/>
            <person name="Harris N.L."/>
            <person name="Harvey D.A."/>
            <person name="Heiman T.J."/>
            <person name="Hernandez J.R."/>
            <person name="Houck J."/>
            <person name="Hostin D."/>
            <person name="Houston K.A."/>
            <person name="Howland T.J."/>
            <person name="Wei M.-H."/>
            <person name="Ibegwam C."/>
            <person name="Jalali M."/>
            <person name="Kalush F."/>
            <person name="Karpen G.H."/>
            <person name="Ke Z."/>
            <person name="Kennison J.A."/>
            <person name="Ketchum K.A."/>
            <person name="Kimmel B.E."/>
            <person name="Kodira C.D."/>
            <person name="Kraft C.L."/>
            <person name="Kravitz S."/>
            <person name="Kulp D."/>
            <person name="Lai Z."/>
            <person name="Lasko P."/>
            <person name="Lei Y."/>
            <person name="Levitsky A.A."/>
            <person name="Li J.H."/>
            <person name="Li Z."/>
            <person name="Liang Y."/>
            <person name="Lin X."/>
            <person name="Liu X."/>
            <person name="Mattei B."/>
            <person name="McIntosh T.C."/>
            <person name="McLeod M.P."/>
            <person name="McPherson D."/>
            <person name="Merkulov G."/>
            <person name="Milshina N.V."/>
            <person name="Mobarry C."/>
            <person name="Morris J."/>
            <person name="Moshrefi A."/>
            <person name="Mount S.M."/>
            <person name="Moy M."/>
            <person name="Murphy B."/>
            <person name="Murphy L."/>
            <person name="Muzny D.M."/>
            <person name="Nelson D.L."/>
            <person name="Nelson D.R."/>
            <person name="Nelson K.A."/>
            <person name="Nixon K."/>
            <person name="Nusskern D.R."/>
            <person name="Pacleb J.M."/>
            <person name="Palazzolo M."/>
            <person name="Pittman G.S."/>
            <person name="Pan S."/>
            <person name="Pollard J."/>
            <person name="Puri V."/>
            <person name="Reese M.G."/>
            <person name="Reinert K."/>
            <person name="Remington K."/>
            <person name="Saunders R.D.C."/>
            <person name="Scheeler F."/>
            <person name="Shen H."/>
            <person name="Shue B.C."/>
            <person name="Siden-Kiamos I."/>
            <person name="Simpson M."/>
            <person name="Skupski M.P."/>
            <person name="Smith T.J."/>
            <person name="Spier E."/>
            <person name="Spradling A.C."/>
            <person name="Stapleton M."/>
            <person name="Strong R."/>
            <person name="Sun E."/>
            <person name="Svirskas R."/>
            <person name="Tector C."/>
            <person name="Turner R."/>
            <person name="Venter E."/>
            <person name="Wang A.H."/>
            <person name="Wang X."/>
            <person name="Wang Z.-Y."/>
            <person name="Wassarman D.A."/>
            <person name="Weinstock G.M."/>
            <person name="Weissenbach J."/>
            <person name="Williams S.M."/>
            <person name="Woodage T."/>
            <person name="Worley K.C."/>
            <person name="Wu D."/>
            <person name="Yang S."/>
            <person name="Yao Q.A."/>
            <person name="Ye J."/>
            <person name="Yeh R.-F."/>
            <person name="Zaveri J.S."/>
            <person name="Zhan M."/>
            <person name="Zhang G."/>
            <person name="Zhao Q."/>
            <person name="Zheng L."/>
            <person name="Zheng X.H."/>
            <person name="Zhong F.N."/>
            <person name="Zhong W."/>
            <person name="Zhou X."/>
            <person name="Zhu S.C."/>
            <person name="Zhu X."/>
            <person name="Smith H.O."/>
            <person name="Gibbs R.A."/>
            <person name="Myers E.W."/>
            <person name="Rubin G.M."/>
            <person name="Venter J.C."/>
        </authorList>
    </citation>
    <scope>NUCLEOTIDE SEQUENCE [LARGE SCALE GENOMIC DNA]</scope>
    <source>
        <strain evidence="4">Berkeley</strain>
    </source>
</reference>
<reference evidence="13" key="3">
    <citation type="journal article" date="2002" name="Genome Biol.">
        <title>Annotation of the Drosophila melanogaster euchromatic genome: a systematic review.</title>
        <authorList>
            <person name="Misra S."/>
            <person name="Crosby M.A."/>
            <person name="Mungall C.J."/>
            <person name="Matthews B.B."/>
            <person name="Campbell K.S."/>
            <person name="Hradecky P."/>
            <person name="Huang Y."/>
            <person name="Kaminker J.S."/>
            <person name="Millburn G.H."/>
            <person name="Prochnik S.E."/>
            <person name="Smith C.D."/>
            <person name="Tupy J.L."/>
            <person name="Whitfield E.J."/>
            <person name="Bayraktaroglu L."/>
            <person name="Berman B.P."/>
            <person name="Bettencourt B.R."/>
            <person name="Celniker S.E."/>
            <person name="de Grey A.D.N.J."/>
            <person name="Drysdale R.A."/>
            <person name="Harris N.L."/>
            <person name="Richter J."/>
            <person name="Russo S."/>
            <person name="Schroeder A.J."/>
            <person name="Shu S.Q."/>
            <person name="Stapleton M."/>
            <person name="Yamada C."/>
            <person name="Ashburner M."/>
            <person name="Gelbart W.M."/>
            <person name="Rubin G.M."/>
            <person name="Lewis S.E."/>
        </authorList>
    </citation>
    <scope>GENOME REANNOTATION</scope>
    <scope>ALTERNATIVE SPLICING</scope>
    <source>
        <strain>Berkeley</strain>
    </source>
</reference>
<reference evidence="10 12" key="4">
    <citation type="journal article" date="2002" name="Genome Biol.">
        <title>A Drosophila full-length cDNA resource.</title>
        <authorList>
            <person name="Stapleton M."/>
            <person name="Carlson J.W."/>
            <person name="Brokstein P."/>
            <person name="Yu C."/>
            <person name="Champe M."/>
            <person name="George R.A."/>
            <person name="Guarin H."/>
            <person name="Kronmiller B."/>
            <person name="Pacleb J.M."/>
            <person name="Park S."/>
            <person name="Wan K.H."/>
            <person name="Rubin G.M."/>
            <person name="Celniker S.E."/>
        </authorList>
    </citation>
    <scope>NUCLEOTIDE SEQUENCE [LARGE SCALE MRNA] (ISOFORM B)</scope>
    <source>
        <strain evidence="12">Berkeley</strain>
        <tissue evidence="5">Embryo</tissue>
    </source>
</reference>
<reference key="5">
    <citation type="submission" date="2006-10" db="EMBL/GenBank/DDBJ databases">
        <authorList>
            <person name="Stapleton M."/>
            <person name="Carlson J.W."/>
            <person name="Frise E."/>
            <person name="Kapadia B."/>
            <person name="Park S."/>
            <person name="Wan K.H."/>
            <person name="Yu C."/>
            <person name="Celniker S.E."/>
        </authorList>
    </citation>
    <scope>NUCLEOTIDE SEQUENCE [LARGE SCALE MRNA] (ISOFORM B)</scope>
    <source>
        <strain>Berkeley</strain>
    </source>
</reference>
<reference key="6">
    <citation type="journal article" date="2008" name="J. Proteome Res.">
        <title>Phosphoproteome analysis of Drosophila melanogaster embryos.</title>
        <authorList>
            <person name="Zhai B."/>
            <person name="Villen J."/>
            <person name="Beausoleil S.A."/>
            <person name="Mintseris J."/>
            <person name="Gygi S.P."/>
        </authorList>
    </citation>
    <scope>PHOSPHORYLATION [LARGE SCALE ANALYSIS] AT THR-126</scope>
    <scope>IDENTIFICATION BY MASS SPECTROMETRY</scope>
    <source>
        <tissue>Embryo</tissue>
    </source>
</reference>
<name>AWH_DROME</name>
<gene>
    <name evidence="13" type="primary">Awh</name>
    <name type="ORF">CG1072</name>
</gene>
<dbReference type="EMBL" id="U82539">
    <property type="protein sequence ID" value="AAB71337.1"/>
    <property type="molecule type" value="mRNA"/>
</dbReference>
<dbReference type="EMBL" id="AE014296">
    <property type="protein sequence ID" value="AAF47800.2"/>
    <property type="molecule type" value="Genomic_DNA"/>
</dbReference>
<dbReference type="EMBL" id="AE014296">
    <property type="protein sequence ID" value="AAN11572.1"/>
    <property type="molecule type" value="Genomic_DNA"/>
</dbReference>
<dbReference type="EMBL" id="AY071197">
    <property type="protein sequence ID" value="AAL48819.1"/>
    <property type="molecule type" value="mRNA"/>
</dbReference>
<dbReference type="EMBL" id="BT025230">
    <property type="protein sequence ID" value="ABF17921.1"/>
    <property type="molecule type" value="mRNA"/>
</dbReference>
<dbReference type="RefSeq" id="NP_523907.2">
    <molecule id="Q8IRC7-2"/>
    <property type="nucleotide sequence ID" value="NM_079183.3"/>
</dbReference>
<dbReference type="RefSeq" id="NP_728906.1">
    <molecule id="Q8IRC7-1"/>
    <property type="nucleotide sequence ID" value="NM_168042.2"/>
</dbReference>
<dbReference type="SMR" id="Q8IRC7"/>
<dbReference type="BioGRID" id="63939">
    <property type="interactions" value="17"/>
</dbReference>
<dbReference type="FunCoup" id="Q8IRC7">
    <property type="interactions" value="84"/>
</dbReference>
<dbReference type="IntAct" id="Q8IRC7">
    <property type="interactions" value="17"/>
</dbReference>
<dbReference type="STRING" id="7227.FBpp0303103"/>
<dbReference type="iPTMnet" id="Q8IRC7"/>
<dbReference type="PaxDb" id="7227-FBpp0073014"/>
<dbReference type="DNASU" id="38451"/>
<dbReference type="EnsemblMetazoa" id="FBtr0073155">
    <molecule id="Q8IRC7-2"/>
    <property type="protein sequence ID" value="FBpp0073013"/>
    <property type="gene ID" value="FBgn0013751"/>
</dbReference>
<dbReference type="EnsemblMetazoa" id="FBtr0073156">
    <molecule id="Q8IRC7-1"/>
    <property type="protein sequence ID" value="FBpp0073014"/>
    <property type="gene ID" value="FBgn0013751"/>
</dbReference>
<dbReference type="GeneID" id="38451"/>
<dbReference type="KEGG" id="dme:Dmel_CG1072"/>
<dbReference type="UCSC" id="CG1072-RA">
    <molecule id="Q8IRC7-1"/>
    <property type="organism name" value="d. melanogaster"/>
</dbReference>
<dbReference type="AGR" id="FB:FBgn0013751"/>
<dbReference type="CTD" id="38451"/>
<dbReference type="FlyBase" id="FBgn0013751">
    <property type="gene designation" value="Awh"/>
</dbReference>
<dbReference type="VEuPathDB" id="VectorBase:FBgn0013751"/>
<dbReference type="eggNOG" id="KOG0490">
    <property type="taxonomic scope" value="Eukaryota"/>
</dbReference>
<dbReference type="GeneTree" id="ENSGT00940000172226"/>
<dbReference type="HOGENOM" id="CLU_027802_7_0_1"/>
<dbReference type="InParanoid" id="Q8IRC7"/>
<dbReference type="OMA" id="DFGRHIN"/>
<dbReference type="OrthoDB" id="10068367at2759"/>
<dbReference type="PhylomeDB" id="Q8IRC7"/>
<dbReference type="BioGRID-ORCS" id="38451">
    <property type="hits" value="0 hits in 3 CRISPR screens"/>
</dbReference>
<dbReference type="GenomeRNAi" id="38451"/>
<dbReference type="PRO" id="PR:Q8IRC7"/>
<dbReference type="Proteomes" id="UP000000803">
    <property type="component" value="Chromosome 3L"/>
</dbReference>
<dbReference type="Bgee" id="FBgn0013751">
    <property type="expression patterns" value="Expressed in columnar neuron T1 (Drosophila) in insect head and 56 other cell types or tissues"/>
</dbReference>
<dbReference type="ExpressionAtlas" id="Q8IRC7">
    <property type="expression patterns" value="baseline and differential"/>
</dbReference>
<dbReference type="GO" id="GO:0005634">
    <property type="term" value="C:nucleus"/>
    <property type="evidence" value="ECO:0000250"/>
    <property type="project" value="UniProtKB"/>
</dbReference>
<dbReference type="GO" id="GO:0003700">
    <property type="term" value="F:DNA-binding transcription factor activity"/>
    <property type="evidence" value="ECO:0000250"/>
    <property type="project" value="UniProtKB"/>
</dbReference>
<dbReference type="GO" id="GO:0000981">
    <property type="term" value="F:DNA-binding transcription factor activity, RNA polymerase II-specific"/>
    <property type="evidence" value="ECO:0000318"/>
    <property type="project" value="GO_Central"/>
</dbReference>
<dbReference type="GO" id="GO:0046872">
    <property type="term" value="F:metal ion binding"/>
    <property type="evidence" value="ECO:0007669"/>
    <property type="project" value="UniProtKB-KW"/>
</dbReference>
<dbReference type="GO" id="GO:0000977">
    <property type="term" value="F:RNA polymerase II transcription regulatory region sequence-specific DNA binding"/>
    <property type="evidence" value="ECO:0000318"/>
    <property type="project" value="GO_Central"/>
</dbReference>
<dbReference type="GO" id="GO:0048749">
    <property type="term" value="P:compound eye development"/>
    <property type="evidence" value="ECO:0000315"/>
    <property type="project" value="FlyBase"/>
</dbReference>
<dbReference type="GO" id="GO:0007444">
    <property type="term" value="P:imaginal disc development"/>
    <property type="evidence" value="ECO:0000315"/>
    <property type="project" value="UniProtKB"/>
</dbReference>
<dbReference type="GO" id="GO:0030182">
    <property type="term" value="P:neuron differentiation"/>
    <property type="evidence" value="ECO:0000318"/>
    <property type="project" value="GO_Central"/>
</dbReference>
<dbReference type="GO" id="GO:0006355">
    <property type="term" value="P:regulation of DNA-templated transcription"/>
    <property type="evidence" value="ECO:0000250"/>
    <property type="project" value="UniProtKB"/>
</dbReference>
<dbReference type="GO" id="GO:0010468">
    <property type="term" value="P:regulation of gene expression"/>
    <property type="evidence" value="ECO:0000315"/>
    <property type="project" value="FlyBase"/>
</dbReference>
<dbReference type="GO" id="GO:0006357">
    <property type="term" value="P:regulation of transcription by RNA polymerase II"/>
    <property type="evidence" value="ECO:0000318"/>
    <property type="project" value="GO_Central"/>
</dbReference>
<dbReference type="CDD" id="cd00086">
    <property type="entry name" value="homeodomain"/>
    <property type="match status" value="1"/>
</dbReference>
<dbReference type="CDD" id="cd09373">
    <property type="entry name" value="LIM1_AWH"/>
    <property type="match status" value="1"/>
</dbReference>
<dbReference type="CDD" id="cd09379">
    <property type="entry name" value="LIM2_AWH"/>
    <property type="match status" value="1"/>
</dbReference>
<dbReference type="FunFam" id="2.10.110.10:FF:000023">
    <property type="entry name" value="LIM homeobox 6"/>
    <property type="match status" value="1"/>
</dbReference>
<dbReference type="FunFam" id="2.10.110.10:FF:000006">
    <property type="entry name" value="LIM homeobox transcription factor 1-beta"/>
    <property type="match status" value="1"/>
</dbReference>
<dbReference type="FunFam" id="1.10.10.60:FF:000027">
    <property type="entry name" value="LIM/homeobox protein Lhx9"/>
    <property type="match status" value="1"/>
</dbReference>
<dbReference type="Gene3D" id="2.10.110.10">
    <property type="entry name" value="Cysteine Rich Protein"/>
    <property type="match status" value="2"/>
</dbReference>
<dbReference type="Gene3D" id="1.10.10.60">
    <property type="entry name" value="Homeodomain-like"/>
    <property type="match status" value="1"/>
</dbReference>
<dbReference type="InterPro" id="IPR001356">
    <property type="entry name" value="HD"/>
</dbReference>
<dbReference type="InterPro" id="IPR009057">
    <property type="entry name" value="Homeodomain-like_sf"/>
</dbReference>
<dbReference type="InterPro" id="IPR050453">
    <property type="entry name" value="LIM_Homeobox_TF"/>
</dbReference>
<dbReference type="InterPro" id="IPR001781">
    <property type="entry name" value="Znf_LIM"/>
</dbReference>
<dbReference type="PANTHER" id="PTHR24208">
    <property type="entry name" value="LIM/HOMEOBOX PROTEIN LHX"/>
    <property type="match status" value="1"/>
</dbReference>
<dbReference type="PANTHER" id="PTHR24208:SF127">
    <property type="entry name" value="LIM_HOMEOBOX PROTEIN AWH"/>
    <property type="match status" value="1"/>
</dbReference>
<dbReference type="Pfam" id="PF00046">
    <property type="entry name" value="Homeodomain"/>
    <property type="match status" value="1"/>
</dbReference>
<dbReference type="Pfam" id="PF00412">
    <property type="entry name" value="LIM"/>
    <property type="match status" value="2"/>
</dbReference>
<dbReference type="SMART" id="SM00389">
    <property type="entry name" value="HOX"/>
    <property type="match status" value="1"/>
</dbReference>
<dbReference type="SMART" id="SM00132">
    <property type="entry name" value="LIM"/>
    <property type="match status" value="2"/>
</dbReference>
<dbReference type="SUPFAM" id="SSF57716">
    <property type="entry name" value="Glucocorticoid receptor-like (DNA-binding domain)"/>
    <property type="match status" value="2"/>
</dbReference>
<dbReference type="SUPFAM" id="SSF46689">
    <property type="entry name" value="Homeodomain-like"/>
    <property type="match status" value="1"/>
</dbReference>
<dbReference type="PROSITE" id="PS50071">
    <property type="entry name" value="HOMEOBOX_2"/>
    <property type="match status" value="1"/>
</dbReference>
<dbReference type="PROSITE" id="PS00478">
    <property type="entry name" value="LIM_DOMAIN_1"/>
    <property type="match status" value="2"/>
</dbReference>
<dbReference type="PROSITE" id="PS50023">
    <property type="entry name" value="LIM_DOMAIN_2"/>
    <property type="match status" value="2"/>
</dbReference>
<comment type="function">
    <text evidence="7 9">Probable transcription factor. Required for the establishment of a subset of imaginal tissues: the abdominal histoblasts and the salivary gland imaginal rings.</text>
</comment>
<comment type="subcellular location">
    <subcellularLocation>
        <location evidence="1">Nucleus</location>
    </subcellularLocation>
</comment>
<comment type="alternative products">
    <event type="alternative splicing"/>
    <isoform>
        <id>Q8IRC7-1</id>
        <name evidence="8">B</name>
        <sequence type="displayed"/>
    </isoform>
    <isoform>
        <id>Q8IRC7-2</id>
        <name evidence="7">A</name>
        <sequence type="described" ref="VSP_051714 VSP_051715"/>
    </isoform>
</comment>
<comment type="tissue specificity">
    <text evidence="7">First detected in neuroblasts in stage 9 embryos. Expressed in all 10 abdominal segments and in the labial segment during early embryogenesis. Expressed in the stage 14 developing epithelium. By embryonic stage 16, expression is refined to the abdominal histoblasts and salivary gland imaginal ring cells. Expressed in both larval and imaginal cells between the salivary gland and the salivary gland imaginal ring, in late third instar larvae. Also expressed in specific areas of the larval wing, leg and eye-antennal disks.</text>
</comment>
<comment type="developmental stage">
    <text evidence="7">Expressed in all stages of zygotic development, with highest levels of expression during embryonic and early pupal stages, and lower levels in larval and adult stages.</text>
</comment>
<evidence type="ECO:0000255" key="1">
    <source>
        <dbReference type="PROSITE-ProRule" id="PRU00108"/>
    </source>
</evidence>
<evidence type="ECO:0000255" key="2">
    <source>
        <dbReference type="PROSITE-ProRule" id="PRU00125"/>
    </source>
</evidence>
<evidence type="ECO:0000256" key="3">
    <source>
        <dbReference type="SAM" id="MobiDB-lite"/>
    </source>
</evidence>
<evidence type="ECO:0000269" key="4">
    <source>
    </source>
</evidence>
<evidence type="ECO:0000269" key="5">
    <source>
    </source>
</evidence>
<evidence type="ECO:0000269" key="6">
    <source>
    </source>
</evidence>
<evidence type="ECO:0000269" key="7">
    <source>
    </source>
</evidence>
<evidence type="ECO:0000303" key="8">
    <source>
    </source>
</evidence>
<evidence type="ECO:0000303" key="9">
    <source>
    </source>
</evidence>
<evidence type="ECO:0000305" key="10"/>
<evidence type="ECO:0000312" key="11">
    <source>
        <dbReference type="EMBL" id="AAB71337.1"/>
    </source>
</evidence>
<evidence type="ECO:0000312" key="12">
    <source>
        <dbReference type="EMBL" id="AAL48819.1"/>
    </source>
</evidence>
<evidence type="ECO:0000312" key="13">
    <source>
        <dbReference type="EMBL" id="AAN11572.1"/>
    </source>
</evidence>